<sequence length="196" mass="21765">MQAVKCVIVGDGAVGKTCLLISYTTNAFPNEYIPTVFDNYSATVMVDSKPINLGLWDTAGQEDYDRLRPLSYPQTDVFLICFSVVSPPSFDNVSSKWQPEVSHHCPKTPCLLVGTKLDMREDKEQLKRLEEKKITPITTEQGEAKCKDIGAVKYIECSALTQKNLRLVFDEAVRAVISPAGGAKKDKKNNRGCLLF</sequence>
<keyword id="KW-1003">Cell membrane</keyword>
<keyword id="KW-0963">Cytoplasm</keyword>
<keyword id="KW-0206">Cytoskeleton</keyword>
<keyword id="KW-0342">GTP-binding</keyword>
<keyword id="KW-0378">Hydrolase</keyword>
<keyword id="KW-0449">Lipoprotein</keyword>
<keyword id="KW-0460">Magnesium</keyword>
<keyword id="KW-0472">Membrane</keyword>
<keyword id="KW-0479">Metal-binding</keyword>
<keyword id="KW-0488">Methylation</keyword>
<keyword id="KW-0547">Nucleotide-binding</keyword>
<keyword id="KW-0581">Phagocytosis</keyword>
<keyword id="KW-0636">Prenylation</keyword>
<keyword id="KW-1185">Reference proteome</keyword>
<evidence type="ECO:0000250" key="1"/>
<evidence type="ECO:0000250" key="2">
    <source>
        <dbReference type="UniProtKB" id="P63000"/>
    </source>
</evidence>
<evidence type="ECO:0000250" key="3">
    <source>
        <dbReference type="UniProtKB" id="Q24816"/>
    </source>
</evidence>
<evidence type="ECO:0000269" key="4">
    <source>
    </source>
</evidence>
<evidence type="ECO:0000269" key="5">
    <source>
    </source>
</evidence>
<evidence type="ECO:0000303" key="6">
    <source>
    </source>
</evidence>
<evidence type="ECO:0000305" key="7"/>
<evidence type="ECO:0000312" key="8">
    <source>
        <dbReference type="EMBL" id="AAC47296.1"/>
    </source>
</evidence>
<evidence type="ECO:0000312" key="9">
    <source>
        <dbReference type="EMBL" id="EAL47607.1"/>
    </source>
</evidence>
<accession>Q24814</accession>
<accession>A0A175JU30</accession>
<accession>C4M5Z7</accession>
<reference evidence="8" key="1">
    <citation type="journal article" date="1996" name="Gene">
        <title>Heterogeneity of Entamoeba histolytica rac genes encoding p21rac homologues.</title>
        <authorList>
            <person name="Lohia A."/>
            <person name="Samuelson J."/>
        </authorList>
    </citation>
    <scope>NUCLEOTIDE SEQUENCE [GENOMIC DNA]</scope>
    <source>
        <strain evidence="8">ATCC 30459 / HM-1:IMSS / ABRM</strain>
    </source>
</reference>
<reference evidence="9" key="2">
    <citation type="journal article" date="2005" name="Nature">
        <title>The genome of the protist parasite Entamoeba histolytica.</title>
        <authorList>
            <person name="Loftus B.J."/>
            <person name="Anderson I."/>
            <person name="Davies R."/>
            <person name="Alsmark U.C."/>
            <person name="Samuelson J."/>
            <person name="Amedeo P."/>
            <person name="Roncaglia P."/>
            <person name="Berriman M."/>
            <person name="Hirt R.P."/>
            <person name="Mann B.J."/>
            <person name="Nozaki T."/>
            <person name="Suh B."/>
            <person name="Pop M."/>
            <person name="Duchene M."/>
            <person name="Ackers J."/>
            <person name="Tannich E."/>
            <person name="Leippe M."/>
            <person name="Hofer M."/>
            <person name="Bruchhaus I."/>
            <person name="Willhoeft U."/>
            <person name="Bhattacharya A."/>
            <person name="Chillingworth T."/>
            <person name="Churcher C.M."/>
            <person name="Hance Z."/>
            <person name="Harris B."/>
            <person name="Harris D."/>
            <person name="Jagels K."/>
            <person name="Moule S."/>
            <person name="Mungall K.L."/>
            <person name="Ormond D."/>
            <person name="Squares R."/>
            <person name="Whitehead S."/>
            <person name="Quail M.A."/>
            <person name="Rabbinowitsch E."/>
            <person name="Norbertczak H."/>
            <person name="Price C."/>
            <person name="Wang Z."/>
            <person name="Guillen N."/>
            <person name="Gilchrist C."/>
            <person name="Stroup S.E."/>
            <person name="Bhattacharya S."/>
            <person name="Lohia A."/>
            <person name="Foster P.G."/>
            <person name="Sicheritz-Ponten T."/>
            <person name="Weber C."/>
            <person name="Singh U."/>
            <person name="Mukherjee C."/>
            <person name="El-Sayed N.M.A."/>
            <person name="Petri W.A."/>
            <person name="Clark C.G."/>
            <person name="Embley T.M."/>
            <person name="Barrell B.G."/>
            <person name="Fraser C.M."/>
            <person name="Hall N."/>
        </authorList>
    </citation>
    <scope>NUCLEOTIDE SEQUENCE [LARGE SCALE GENOMIC DNA]</scope>
    <source>
        <strain evidence="9">ATCC 30459 / HM-1:IMSS / ABRM</strain>
    </source>
</reference>
<reference key="3">
    <citation type="journal article" date="1997" name="Infect. Immun.">
        <title>Involvement of p21racA, phosphoinositide 3-kinase, and vacuolar ATPase in phagocytosis of bacteria and erythrocytes by Entamoeba histolytica: suggestive evidence for coincidental evolution of amebic invasiveness.</title>
        <authorList>
            <person name="Ghosh S.K."/>
            <person name="Samuelson J."/>
        </authorList>
    </citation>
    <scope>FUNCTION</scope>
</reference>
<reference key="4">
    <citation type="journal article" date="2006" name="Mol. Biochem. Parasitol.">
        <title>EhPAK2, a novel p21-activated kinase, is required for collagen invasion and capping in Entamoeba histolytica.</title>
        <authorList>
            <person name="Arias-Romero L.E."/>
            <person name="de Jesus Almaraz-Barrera M."/>
            <person name="Diaz-Valencia J.D."/>
            <person name="Rojo-Dominguez A."/>
            <person name="Hernandez-Rivas R."/>
            <person name="Vargas M."/>
        </authorList>
    </citation>
    <scope>INTERACTION WITH PAK2</scope>
</reference>
<protein>
    <recommendedName>
        <fullName>Rho-related protein racA</fullName>
        <ecNumber evidence="2">3.6.5.2</ecNumber>
    </recommendedName>
</protein>
<gene>
    <name evidence="6" type="primary">RACA</name>
    <name evidence="9" type="ORF">EHI_181250</name>
</gene>
<comment type="function">
    <text evidence="2 5">Small GTPase which cycles between active GTP-bound and inactive GDP-bound states (By similarity). Involved in cytoskeleton remodeling (PubMed:9317033). Plays a role in phagocytosis of bacteria and host erythrocytes (PubMed:9317033). Involved in capping of surface receptors (PubMed:9317033). May be involved in cytokinesis (PubMed:9317033).</text>
</comment>
<comment type="catalytic activity">
    <reaction evidence="2">
        <text>GTP + H2O = GDP + phosphate + H(+)</text>
        <dbReference type="Rhea" id="RHEA:19669"/>
        <dbReference type="ChEBI" id="CHEBI:15377"/>
        <dbReference type="ChEBI" id="CHEBI:15378"/>
        <dbReference type="ChEBI" id="CHEBI:37565"/>
        <dbReference type="ChEBI" id="CHEBI:43474"/>
        <dbReference type="ChEBI" id="CHEBI:58189"/>
        <dbReference type="EC" id="3.6.5.2"/>
    </reaction>
    <physiologicalReaction direction="left-to-right" evidence="2">
        <dbReference type="Rhea" id="RHEA:19670"/>
    </physiologicalReaction>
</comment>
<comment type="cofactor">
    <cofactor evidence="3">
        <name>Mg(2+)</name>
        <dbReference type="ChEBI" id="CHEBI:18420"/>
    </cofactor>
</comment>
<comment type="activity regulation">
    <text evidence="2">Regulated by guanine nucleotide exchange factors (GEFs) which promote the exchange of bound GDP for free GTP, GTPase activating proteins (GAPs) which increase the GTP hydrolysis activity, and GDP dissociation inhibitors which inhibit the dissociation of the nucleotide from the GTPase.</text>
</comment>
<comment type="subunit">
    <text evidence="4">Interacts (GTP-bound form) with PAK2 (via CRIB domain).</text>
</comment>
<comment type="subcellular location">
    <subcellularLocation>
        <location evidence="2">Cell membrane</location>
        <topology evidence="2">Lipid-anchor</topology>
        <orientation evidence="2">Cytoplasmic side</orientation>
    </subcellularLocation>
    <subcellularLocation>
        <location evidence="2">Cytoplasm</location>
        <location evidence="2">Cytoskeleton</location>
    </subcellularLocation>
    <subcellularLocation>
        <location evidence="2">Cytoplasm</location>
    </subcellularLocation>
</comment>
<comment type="domain">
    <text evidence="3">The switch 1 and switch 2 motifs undergo large conformational changes during GTP/GDP cycle and play important roles in the interaction with downstream effectors.</text>
</comment>
<comment type="similarity">
    <text evidence="7">Belongs to the small GTPase superfamily. Rho family.</text>
</comment>
<name>RACA_ENTH1</name>
<organism evidence="9">
    <name type="scientific">Entamoeba histolytica (strain ATCC 30459 / HM-1:IMSS / ABRM)</name>
    <dbReference type="NCBI Taxonomy" id="294381"/>
    <lineage>
        <taxon>Eukaryota</taxon>
        <taxon>Amoebozoa</taxon>
        <taxon>Evosea</taxon>
        <taxon>Archamoebae</taxon>
        <taxon>Mastigamoebida</taxon>
        <taxon>Entamoebidae</taxon>
        <taxon>Entamoeba</taxon>
    </lineage>
</organism>
<dbReference type="EC" id="3.6.5.2" evidence="2"/>
<dbReference type="EMBL" id="U29720">
    <property type="protein sequence ID" value="AAC47296.1"/>
    <property type="molecule type" value="Genomic_DNA"/>
</dbReference>
<dbReference type="EMBL" id="DS571288">
    <property type="protein sequence ID" value="EAL47607.1"/>
    <property type="molecule type" value="Genomic_DNA"/>
</dbReference>
<dbReference type="PIR" id="JC4931">
    <property type="entry name" value="JC4931"/>
</dbReference>
<dbReference type="RefSeq" id="XP_652995.1">
    <property type="nucleotide sequence ID" value="XM_647903.2"/>
</dbReference>
<dbReference type="SMR" id="Q24814"/>
<dbReference type="STRING" id="5759.C4M5Z7"/>
<dbReference type="EnsemblProtists" id="GAT96873">
    <property type="protein sequence ID" value="GAT96873"/>
    <property type="gene ID" value="CL6EHI_181250"/>
</dbReference>
<dbReference type="EnsemblProtists" id="rna_EHI_181250-1">
    <property type="protein sequence ID" value="rna_EHI_181250-1"/>
    <property type="gene ID" value="EHI_181250"/>
</dbReference>
<dbReference type="GeneID" id="3407299"/>
<dbReference type="KEGG" id="ehi:EHI_181250"/>
<dbReference type="VEuPathDB" id="AmoebaDB:EHI5A_026360"/>
<dbReference type="VEuPathDB" id="AmoebaDB:EHI7A_021100"/>
<dbReference type="VEuPathDB" id="AmoebaDB:EHI8A_014430"/>
<dbReference type="VEuPathDB" id="AmoebaDB:EHI_181250"/>
<dbReference type="VEuPathDB" id="AmoebaDB:KM1_026260"/>
<dbReference type="eggNOG" id="KOG0393">
    <property type="taxonomic scope" value="Eukaryota"/>
</dbReference>
<dbReference type="HOGENOM" id="CLU_041217_21_3_1"/>
<dbReference type="OMA" id="RRMAPIT"/>
<dbReference type="OrthoDB" id="8830751at2759"/>
<dbReference type="Proteomes" id="UP000001926">
    <property type="component" value="Partially assembled WGS sequence"/>
</dbReference>
<dbReference type="GO" id="GO:0042995">
    <property type="term" value="C:cell projection"/>
    <property type="evidence" value="ECO:0000318"/>
    <property type="project" value="GO_Central"/>
</dbReference>
<dbReference type="GO" id="GO:0031410">
    <property type="term" value="C:cytoplasmic vesicle"/>
    <property type="evidence" value="ECO:0000318"/>
    <property type="project" value="GO_Central"/>
</dbReference>
<dbReference type="GO" id="GO:0005856">
    <property type="term" value="C:cytoskeleton"/>
    <property type="evidence" value="ECO:0000318"/>
    <property type="project" value="GO_Central"/>
</dbReference>
<dbReference type="GO" id="GO:0005886">
    <property type="term" value="C:plasma membrane"/>
    <property type="evidence" value="ECO:0000318"/>
    <property type="project" value="GO_Central"/>
</dbReference>
<dbReference type="GO" id="GO:0005525">
    <property type="term" value="F:GTP binding"/>
    <property type="evidence" value="ECO:0000318"/>
    <property type="project" value="GO_Central"/>
</dbReference>
<dbReference type="GO" id="GO:0003924">
    <property type="term" value="F:GTPase activity"/>
    <property type="evidence" value="ECO:0000318"/>
    <property type="project" value="GO_Central"/>
</dbReference>
<dbReference type="GO" id="GO:0046872">
    <property type="term" value="F:metal ion binding"/>
    <property type="evidence" value="ECO:0007669"/>
    <property type="project" value="UniProtKB-KW"/>
</dbReference>
<dbReference type="GO" id="GO:0019901">
    <property type="term" value="F:protein kinase binding"/>
    <property type="evidence" value="ECO:0000318"/>
    <property type="project" value="GO_Central"/>
</dbReference>
<dbReference type="GO" id="GO:0030036">
    <property type="term" value="P:actin cytoskeleton organization"/>
    <property type="evidence" value="ECO:0000315"/>
    <property type="project" value="UniProtKB"/>
</dbReference>
<dbReference type="GO" id="GO:0007015">
    <property type="term" value="P:actin filament organization"/>
    <property type="evidence" value="ECO:0000318"/>
    <property type="project" value="GO_Central"/>
</dbReference>
<dbReference type="GO" id="GO:0030865">
    <property type="term" value="P:cortical cytoskeleton organization"/>
    <property type="evidence" value="ECO:0000318"/>
    <property type="project" value="GO_Central"/>
</dbReference>
<dbReference type="GO" id="GO:0007163">
    <property type="term" value="P:establishment or maintenance of cell polarity"/>
    <property type="evidence" value="ECO:0000318"/>
    <property type="project" value="GO_Central"/>
</dbReference>
<dbReference type="GO" id="GO:0000281">
    <property type="term" value="P:mitotic cytokinesis"/>
    <property type="evidence" value="ECO:0000318"/>
    <property type="project" value="GO_Central"/>
</dbReference>
<dbReference type="GO" id="GO:0006909">
    <property type="term" value="P:phagocytosis"/>
    <property type="evidence" value="ECO:0007669"/>
    <property type="project" value="UniProtKB-KW"/>
</dbReference>
<dbReference type="GO" id="GO:0032956">
    <property type="term" value="P:regulation of actin cytoskeleton organization"/>
    <property type="evidence" value="ECO:0000318"/>
    <property type="project" value="GO_Central"/>
</dbReference>
<dbReference type="GO" id="GO:0008360">
    <property type="term" value="P:regulation of cell shape"/>
    <property type="evidence" value="ECO:0000318"/>
    <property type="project" value="GO_Central"/>
</dbReference>
<dbReference type="GO" id="GO:0050764">
    <property type="term" value="P:regulation of phagocytosis"/>
    <property type="evidence" value="ECO:0000315"/>
    <property type="project" value="UniProtKB"/>
</dbReference>
<dbReference type="GO" id="GO:0007165">
    <property type="term" value="P:signal transduction"/>
    <property type="evidence" value="ECO:0000318"/>
    <property type="project" value="GO_Central"/>
</dbReference>
<dbReference type="GO" id="GO:0007264">
    <property type="term" value="P:small GTPase-mediated signal transduction"/>
    <property type="evidence" value="ECO:0007669"/>
    <property type="project" value="InterPro"/>
</dbReference>
<dbReference type="CDD" id="cd01871">
    <property type="entry name" value="Rac1_like"/>
    <property type="match status" value="1"/>
</dbReference>
<dbReference type="FunFam" id="3.40.50.300:FF:000088">
    <property type="entry name" value="Ras-related C3 botulinum toxin substrate 1"/>
    <property type="match status" value="1"/>
</dbReference>
<dbReference type="Gene3D" id="3.40.50.300">
    <property type="entry name" value="P-loop containing nucleotide triphosphate hydrolases"/>
    <property type="match status" value="1"/>
</dbReference>
<dbReference type="InterPro" id="IPR027417">
    <property type="entry name" value="P-loop_NTPase"/>
</dbReference>
<dbReference type="InterPro" id="IPR005225">
    <property type="entry name" value="Small_GTP-bd"/>
</dbReference>
<dbReference type="InterPro" id="IPR001806">
    <property type="entry name" value="Small_GTPase"/>
</dbReference>
<dbReference type="InterPro" id="IPR003578">
    <property type="entry name" value="Small_GTPase_Rho"/>
</dbReference>
<dbReference type="NCBIfam" id="TIGR00231">
    <property type="entry name" value="small_GTP"/>
    <property type="match status" value="1"/>
</dbReference>
<dbReference type="PANTHER" id="PTHR24072">
    <property type="entry name" value="RHO FAMILY GTPASE"/>
    <property type="match status" value="1"/>
</dbReference>
<dbReference type="Pfam" id="PF00071">
    <property type="entry name" value="Ras"/>
    <property type="match status" value="1"/>
</dbReference>
<dbReference type="PRINTS" id="PR00449">
    <property type="entry name" value="RASTRNSFRMNG"/>
</dbReference>
<dbReference type="SMART" id="SM00175">
    <property type="entry name" value="RAB"/>
    <property type="match status" value="1"/>
</dbReference>
<dbReference type="SMART" id="SM00176">
    <property type="entry name" value="RAN"/>
    <property type="match status" value="1"/>
</dbReference>
<dbReference type="SMART" id="SM00173">
    <property type="entry name" value="RAS"/>
    <property type="match status" value="1"/>
</dbReference>
<dbReference type="SMART" id="SM00174">
    <property type="entry name" value="RHO"/>
    <property type="match status" value="1"/>
</dbReference>
<dbReference type="SUPFAM" id="SSF52540">
    <property type="entry name" value="P-loop containing nucleoside triphosphate hydrolases"/>
    <property type="match status" value="1"/>
</dbReference>
<dbReference type="PROSITE" id="PS51420">
    <property type="entry name" value="RHO"/>
    <property type="match status" value="1"/>
</dbReference>
<feature type="chain" id="PRO_0000198910" description="Rho-related protein racA">
    <location>
        <begin position="1"/>
        <end position="193"/>
    </location>
</feature>
<feature type="propeptide" id="PRO_0000281259" description="Removed in mature form" evidence="1">
    <location>
        <begin position="194"/>
        <end position="196"/>
    </location>
</feature>
<feature type="short sequence motif" description="Switch 1" evidence="3">
    <location>
        <begin position="26"/>
        <end position="37"/>
    </location>
</feature>
<feature type="short sequence motif" description="Switch 2" evidence="3">
    <location>
        <begin position="57"/>
        <end position="75"/>
    </location>
</feature>
<feature type="binding site" evidence="3">
    <location>
        <position position="13"/>
    </location>
    <ligand>
        <name>GTP</name>
        <dbReference type="ChEBI" id="CHEBI:37565"/>
    </ligand>
</feature>
<feature type="binding site" evidence="3">
    <location>
        <position position="15"/>
    </location>
    <ligand>
        <name>GTP</name>
        <dbReference type="ChEBI" id="CHEBI:37565"/>
    </ligand>
</feature>
<feature type="binding site" evidence="3">
    <location>
        <position position="16"/>
    </location>
    <ligand>
        <name>GTP</name>
        <dbReference type="ChEBI" id="CHEBI:37565"/>
    </ligand>
</feature>
<feature type="binding site" evidence="3">
    <location>
        <position position="17"/>
    </location>
    <ligand>
        <name>GTP</name>
        <dbReference type="ChEBI" id="CHEBI:37565"/>
    </ligand>
</feature>
<feature type="binding site" evidence="3">
    <location>
        <position position="17"/>
    </location>
    <ligand>
        <name>Mg(2+)</name>
        <dbReference type="ChEBI" id="CHEBI:18420"/>
    </ligand>
</feature>
<feature type="binding site" evidence="3">
    <location>
        <position position="18"/>
    </location>
    <ligand>
        <name>GTP</name>
        <dbReference type="ChEBI" id="CHEBI:37565"/>
    </ligand>
</feature>
<feature type="binding site" evidence="3">
    <location>
        <position position="32"/>
    </location>
    <ligand>
        <name>GTP</name>
        <dbReference type="ChEBI" id="CHEBI:37565"/>
    </ligand>
</feature>
<feature type="binding site" evidence="3">
    <location>
        <position position="35"/>
    </location>
    <ligand>
        <name>GTP</name>
        <dbReference type="ChEBI" id="CHEBI:37565"/>
    </ligand>
</feature>
<feature type="binding site" evidence="3">
    <location>
        <position position="35"/>
    </location>
    <ligand>
        <name>Mg(2+)</name>
        <dbReference type="ChEBI" id="CHEBI:18420"/>
    </ligand>
</feature>
<feature type="binding site" evidence="3">
    <location>
        <position position="60"/>
    </location>
    <ligand>
        <name>GTP</name>
        <dbReference type="ChEBI" id="CHEBI:37565"/>
    </ligand>
</feature>
<feature type="binding site" evidence="3">
    <location>
        <position position="116"/>
    </location>
    <ligand>
        <name>GTP</name>
        <dbReference type="ChEBI" id="CHEBI:37565"/>
    </ligand>
</feature>
<feature type="binding site" evidence="3">
    <location>
        <position position="118"/>
    </location>
    <ligand>
        <name>GTP</name>
        <dbReference type="ChEBI" id="CHEBI:37565"/>
    </ligand>
</feature>
<feature type="binding site" evidence="3">
    <location>
        <position position="159"/>
    </location>
    <ligand>
        <name>GTP</name>
        <dbReference type="ChEBI" id="CHEBI:37565"/>
    </ligand>
</feature>
<feature type="modified residue" description="Cysteine methyl ester" evidence="1">
    <location>
        <position position="193"/>
    </location>
</feature>
<feature type="lipid moiety-binding region" description="S-geranylgeranyl cysteine" evidence="1">
    <location>
        <position position="193"/>
    </location>
</feature>
<proteinExistence type="evidence at protein level"/>